<dbReference type="EMBL" id="CP000918">
    <property type="protein sequence ID" value="ACO17143.1"/>
    <property type="molecule type" value="Genomic_DNA"/>
</dbReference>
<dbReference type="RefSeq" id="WP_000359036.1">
    <property type="nucleotide sequence ID" value="NC_012468.1"/>
</dbReference>
<dbReference type="SMR" id="C1C8A2"/>
<dbReference type="KEGG" id="snm:SP70585_1548"/>
<dbReference type="HOGENOM" id="CLU_085114_1_2_9"/>
<dbReference type="Proteomes" id="UP000002211">
    <property type="component" value="Chromosome"/>
</dbReference>
<dbReference type="GO" id="GO:0005886">
    <property type="term" value="C:plasma membrane"/>
    <property type="evidence" value="ECO:0007669"/>
    <property type="project" value="UniProtKB-SubCell"/>
</dbReference>
<dbReference type="GO" id="GO:0045259">
    <property type="term" value="C:proton-transporting ATP synthase complex"/>
    <property type="evidence" value="ECO:0007669"/>
    <property type="project" value="UniProtKB-KW"/>
</dbReference>
<dbReference type="GO" id="GO:0046933">
    <property type="term" value="F:proton-transporting ATP synthase activity, rotational mechanism"/>
    <property type="evidence" value="ECO:0007669"/>
    <property type="project" value="UniProtKB-UniRule"/>
</dbReference>
<dbReference type="Gene3D" id="1.10.520.20">
    <property type="entry name" value="N-terminal domain of the delta subunit of the F1F0-ATP synthase"/>
    <property type="match status" value="1"/>
</dbReference>
<dbReference type="HAMAP" id="MF_01416">
    <property type="entry name" value="ATP_synth_delta_bact"/>
    <property type="match status" value="1"/>
</dbReference>
<dbReference type="InterPro" id="IPR026015">
    <property type="entry name" value="ATP_synth_OSCP/delta_N_sf"/>
</dbReference>
<dbReference type="InterPro" id="IPR000711">
    <property type="entry name" value="ATPase_OSCP/dsu"/>
</dbReference>
<dbReference type="NCBIfam" id="TIGR01145">
    <property type="entry name" value="ATP_synt_delta"/>
    <property type="match status" value="1"/>
</dbReference>
<dbReference type="NCBIfam" id="NF004401">
    <property type="entry name" value="PRK05758.2-1"/>
    <property type="match status" value="1"/>
</dbReference>
<dbReference type="PANTHER" id="PTHR11910">
    <property type="entry name" value="ATP SYNTHASE DELTA CHAIN"/>
    <property type="match status" value="1"/>
</dbReference>
<dbReference type="Pfam" id="PF00213">
    <property type="entry name" value="OSCP"/>
    <property type="match status" value="1"/>
</dbReference>
<dbReference type="PRINTS" id="PR00125">
    <property type="entry name" value="ATPASEDELTA"/>
</dbReference>
<dbReference type="SUPFAM" id="SSF47928">
    <property type="entry name" value="N-terminal domain of the delta subunit of the F1F0-ATP synthase"/>
    <property type="match status" value="1"/>
</dbReference>
<feature type="chain" id="PRO_0000382151" description="ATP synthase subunit delta">
    <location>
        <begin position="1"/>
        <end position="178"/>
    </location>
</feature>
<name>ATPD_STRP7</name>
<comment type="function">
    <text evidence="1">F(1)F(0) ATP synthase produces ATP from ADP in the presence of a proton or sodium gradient. F-type ATPases consist of two structural domains, F(1) containing the extramembraneous catalytic core and F(0) containing the membrane proton channel, linked together by a central stalk and a peripheral stalk. During catalysis, ATP synthesis in the catalytic domain of F(1) is coupled via a rotary mechanism of the central stalk subunits to proton translocation.</text>
</comment>
<comment type="function">
    <text evidence="1">This protein is part of the stalk that links CF(0) to CF(1). It either transmits conformational changes from CF(0) to CF(1) or is implicated in proton conduction.</text>
</comment>
<comment type="subunit">
    <text evidence="1">F-type ATPases have 2 components, F(1) - the catalytic core - and F(0) - the membrane proton channel. F(1) has five subunits: alpha(3), beta(3), gamma(1), delta(1), epsilon(1). F(0) has three main subunits: a(1), b(2) and c(10-14). The alpha and beta chains form an alternating ring which encloses part of the gamma chain. F(1) is attached to F(0) by a central stalk formed by the gamma and epsilon chains, while a peripheral stalk is formed by the delta and b chains.</text>
</comment>
<comment type="subcellular location">
    <subcellularLocation>
        <location evidence="1">Cell membrane</location>
        <topology evidence="1">Peripheral membrane protein</topology>
    </subcellularLocation>
</comment>
<comment type="similarity">
    <text evidence="1">Belongs to the ATPase delta chain family.</text>
</comment>
<protein>
    <recommendedName>
        <fullName evidence="1">ATP synthase subunit delta</fullName>
    </recommendedName>
    <alternativeName>
        <fullName evidence="1">ATP synthase F(1) sector subunit delta</fullName>
    </alternativeName>
    <alternativeName>
        <fullName evidence="1">F-type ATPase subunit delta</fullName>
        <shortName evidence="1">F-ATPase subunit delta</shortName>
    </alternativeName>
</protein>
<proteinExistence type="inferred from homology"/>
<evidence type="ECO:0000255" key="1">
    <source>
        <dbReference type="HAMAP-Rule" id="MF_01416"/>
    </source>
</evidence>
<keyword id="KW-0066">ATP synthesis</keyword>
<keyword id="KW-1003">Cell membrane</keyword>
<keyword id="KW-0139">CF(1)</keyword>
<keyword id="KW-0375">Hydrogen ion transport</keyword>
<keyword id="KW-0406">Ion transport</keyword>
<keyword id="KW-0472">Membrane</keyword>
<keyword id="KW-0813">Transport</keyword>
<accession>C1C8A2</accession>
<sequence>MDKKTVKVIEKYSMPFVQLVLEKGEEDRIFSDLTQIKQVVEKTGLPSFLKQVAVDESDKEKTIAFFQDSVSPLLQNFIQVLAYNHRANLFYDVLVDCLNRLEKETNRFEVTITSAHPLTDEQKTRLLPLIEKKMSLKVRSVKEQIDESLIGGFVIFANHKTIDVSIKQQLKVVKENLK</sequence>
<reference key="1">
    <citation type="journal article" date="2010" name="Genome Biol.">
        <title>Structure and dynamics of the pan-genome of Streptococcus pneumoniae and closely related species.</title>
        <authorList>
            <person name="Donati C."/>
            <person name="Hiller N.L."/>
            <person name="Tettelin H."/>
            <person name="Muzzi A."/>
            <person name="Croucher N.J."/>
            <person name="Angiuoli S.V."/>
            <person name="Oggioni M."/>
            <person name="Dunning Hotopp J.C."/>
            <person name="Hu F.Z."/>
            <person name="Riley D.R."/>
            <person name="Covacci A."/>
            <person name="Mitchell T.J."/>
            <person name="Bentley S.D."/>
            <person name="Kilian M."/>
            <person name="Ehrlich G.D."/>
            <person name="Rappuoli R."/>
            <person name="Moxon E.R."/>
            <person name="Masignani V."/>
        </authorList>
    </citation>
    <scope>NUCLEOTIDE SEQUENCE [LARGE SCALE GENOMIC DNA]</scope>
    <source>
        <strain>70585</strain>
    </source>
</reference>
<gene>
    <name evidence="1" type="primary">atpH</name>
    <name type="ordered locus">SP70585_1548</name>
</gene>
<organism>
    <name type="scientific">Streptococcus pneumoniae (strain 70585)</name>
    <dbReference type="NCBI Taxonomy" id="488221"/>
    <lineage>
        <taxon>Bacteria</taxon>
        <taxon>Bacillati</taxon>
        <taxon>Bacillota</taxon>
        <taxon>Bacilli</taxon>
        <taxon>Lactobacillales</taxon>
        <taxon>Streptococcaceae</taxon>
        <taxon>Streptococcus</taxon>
    </lineage>
</organism>